<name>TOLB_XANAC</name>
<proteinExistence type="inferred from homology"/>
<comment type="function">
    <text evidence="1">Part of the Tol-Pal system, which plays a role in outer membrane invagination during cell division and is important for maintaining outer membrane integrity.</text>
</comment>
<comment type="subunit">
    <text evidence="1">The Tol-Pal system is composed of five core proteins: the inner membrane proteins TolA, TolQ and TolR, the periplasmic protein TolB and the outer membrane protein Pal. They form a network linking the inner and outer membranes and the peptidoglycan layer.</text>
</comment>
<comment type="subcellular location">
    <subcellularLocation>
        <location evidence="1">Periplasm</location>
    </subcellularLocation>
</comment>
<comment type="similarity">
    <text evidence="1">Belongs to the TolB family.</text>
</comment>
<organism>
    <name type="scientific">Xanthomonas axonopodis pv. citri (strain 306)</name>
    <dbReference type="NCBI Taxonomy" id="190486"/>
    <lineage>
        <taxon>Bacteria</taxon>
        <taxon>Pseudomonadati</taxon>
        <taxon>Pseudomonadota</taxon>
        <taxon>Gammaproteobacteria</taxon>
        <taxon>Lysobacterales</taxon>
        <taxon>Lysobacteraceae</taxon>
        <taxon>Xanthomonas</taxon>
    </lineage>
</organism>
<accession>Q8PHV7</accession>
<protein>
    <recommendedName>
        <fullName evidence="1">Tol-Pal system protein TolB</fullName>
    </recommendedName>
</protein>
<sequence>MKKPLRWLAALTALLLPLSALAQQQGLTIDIVGGSASATPIAVIPMPYQGSGTAPQTDVSAVVGADLDRSGQFRTLPAAQIVEKPTRGTEVQFQTWRTLKQNYIVVGRVMDAGEGAYRVEYELFDVAKGERMLGLAMTARANAMRDVSHQMADAIYEKITGVRGAFWTRIAYVTASGKGGAMRYALMVADSDGYNPQTIVRSAEPLLSPNWSPDGKKLAYVSFERGNSSIYLQDIATGARELVSSFRGINGAPSFSPDGRRLALALSRSGNPEIYVMDLGSKQLTQLTNHFGIDTEPTWAPDGGSIYFTSDRGGRPQIYQVAASGGSANRVTFQGNYNATASVSFDGKKIAVAQGSGNTYRIAMMDRSLGSPSWSTLSPGSLDESPSFAPNASMVLYAAREGGRGVLYAVSSDARVRQRLVLADGDVREPAWGPYRTAH</sequence>
<gene>
    <name evidence="1" type="primary">tolB</name>
    <name type="ordered locus">XAC3142</name>
</gene>
<reference key="1">
    <citation type="journal article" date="2002" name="Nature">
        <title>Comparison of the genomes of two Xanthomonas pathogens with differing host specificities.</title>
        <authorList>
            <person name="da Silva A.C.R."/>
            <person name="Ferro J.A."/>
            <person name="Reinach F.C."/>
            <person name="Farah C.S."/>
            <person name="Furlan L.R."/>
            <person name="Quaggio R.B."/>
            <person name="Monteiro-Vitorello C.B."/>
            <person name="Van Sluys M.A."/>
            <person name="Almeida N.F. Jr."/>
            <person name="Alves L.M.C."/>
            <person name="do Amaral A.M."/>
            <person name="Bertolini M.C."/>
            <person name="Camargo L.E.A."/>
            <person name="Camarotte G."/>
            <person name="Cannavan F."/>
            <person name="Cardozo J."/>
            <person name="Chambergo F."/>
            <person name="Ciapina L.P."/>
            <person name="Cicarelli R.M.B."/>
            <person name="Coutinho L.L."/>
            <person name="Cursino-Santos J.R."/>
            <person name="El-Dorry H."/>
            <person name="Faria J.B."/>
            <person name="Ferreira A.J.S."/>
            <person name="Ferreira R.C.C."/>
            <person name="Ferro M.I.T."/>
            <person name="Formighieri E.F."/>
            <person name="Franco M.C."/>
            <person name="Greggio C.C."/>
            <person name="Gruber A."/>
            <person name="Katsuyama A.M."/>
            <person name="Kishi L.T."/>
            <person name="Leite R.P."/>
            <person name="Lemos E.G.M."/>
            <person name="Lemos M.V.F."/>
            <person name="Locali E.C."/>
            <person name="Machado M.A."/>
            <person name="Madeira A.M.B.N."/>
            <person name="Martinez-Rossi N.M."/>
            <person name="Martins E.C."/>
            <person name="Meidanis J."/>
            <person name="Menck C.F.M."/>
            <person name="Miyaki C.Y."/>
            <person name="Moon D.H."/>
            <person name="Moreira L.M."/>
            <person name="Novo M.T.M."/>
            <person name="Okura V.K."/>
            <person name="Oliveira M.C."/>
            <person name="Oliveira V.R."/>
            <person name="Pereira H.A."/>
            <person name="Rossi A."/>
            <person name="Sena J.A.D."/>
            <person name="Silva C."/>
            <person name="de Souza R.F."/>
            <person name="Spinola L.A.F."/>
            <person name="Takita M.A."/>
            <person name="Tamura R.E."/>
            <person name="Teixeira E.C."/>
            <person name="Tezza R.I.D."/>
            <person name="Trindade dos Santos M."/>
            <person name="Truffi D."/>
            <person name="Tsai S.M."/>
            <person name="White F.F."/>
            <person name="Setubal J.C."/>
            <person name="Kitajima J.P."/>
        </authorList>
    </citation>
    <scope>NUCLEOTIDE SEQUENCE [LARGE SCALE GENOMIC DNA]</scope>
    <source>
        <strain>306</strain>
    </source>
</reference>
<feature type="signal peptide" evidence="1">
    <location>
        <begin position="1"/>
        <end position="22"/>
    </location>
</feature>
<feature type="chain" id="PRO_0000034697" description="Tol-Pal system protein TolB" evidence="1">
    <location>
        <begin position="23"/>
        <end position="439"/>
    </location>
</feature>
<keyword id="KW-0131">Cell cycle</keyword>
<keyword id="KW-0132">Cell division</keyword>
<keyword id="KW-0574">Periplasm</keyword>
<keyword id="KW-0732">Signal</keyword>
<evidence type="ECO:0000255" key="1">
    <source>
        <dbReference type="HAMAP-Rule" id="MF_00671"/>
    </source>
</evidence>
<dbReference type="EMBL" id="AE008923">
    <property type="protein sequence ID" value="AAM37986.1"/>
    <property type="molecule type" value="Genomic_DNA"/>
</dbReference>
<dbReference type="RefSeq" id="WP_003482565.1">
    <property type="nucleotide sequence ID" value="NC_003919.1"/>
</dbReference>
<dbReference type="SMR" id="Q8PHV7"/>
<dbReference type="GeneID" id="97511398"/>
<dbReference type="KEGG" id="xac:XAC3142"/>
<dbReference type="eggNOG" id="COG0823">
    <property type="taxonomic scope" value="Bacteria"/>
</dbReference>
<dbReference type="HOGENOM" id="CLU_047123_0_0_6"/>
<dbReference type="Proteomes" id="UP000000576">
    <property type="component" value="Chromosome"/>
</dbReference>
<dbReference type="GO" id="GO:0042597">
    <property type="term" value="C:periplasmic space"/>
    <property type="evidence" value="ECO:0007669"/>
    <property type="project" value="UniProtKB-SubCell"/>
</dbReference>
<dbReference type="GO" id="GO:0051301">
    <property type="term" value="P:cell division"/>
    <property type="evidence" value="ECO:0007669"/>
    <property type="project" value="UniProtKB-UniRule"/>
</dbReference>
<dbReference type="GO" id="GO:0017038">
    <property type="term" value="P:protein import"/>
    <property type="evidence" value="ECO:0007669"/>
    <property type="project" value="InterPro"/>
</dbReference>
<dbReference type="Gene3D" id="2.120.10.30">
    <property type="entry name" value="TolB, C-terminal domain"/>
    <property type="match status" value="1"/>
</dbReference>
<dbReference type="Gene3D" id="3.40.50.10070">
    <property type="entry name" value="TolB, N-terminal domain"/>
    <property type="match status" value="1"/>
</dbReference>
<dbReference type="HAMAP" id="MF_00671">
    <property type="entry name" value="TolB"/>
    <property type="match status" value="1"/>
</dbReference>
<dbReference type="InterPro" id="IPR011042">
    <property type="entry name" value="6-blade_b-propeller_TolB-like"/>
</dbReference>
<dbReference type="InterPro" id="IPR011659">
    <property type="entry name" value="PD40"/>
</dbReference>
<dbReference type="InterPro" id="IPR014167">
    <property type="entry name" value="Tol-Pal_TolB"/>
</dbReference>
<dbReference type="InterPro" id="IPR007195">
    <property type="entry name" value="TolB_N"/>
</dbReference>
<dbReference type="NCBIfam" id="TIGR02800">
    <property type="entry name" value="propeller_TolB"/>
    <property type="match status" value="1"/>
</dbReference>
<dbReference type="PANTHER" id="PTHR36842:SF1">
    <property type="entry name" value="PROTEIN TOLB"/>
    <property type="match status" value="1"/>
</dbReference>
<dbReference type="PANTHER" id="PTHR36842">
    <property type="entry name" value="PROTEIN TOLB HOMOLOG"/>
    <property type="match status" value="1"/>
</dbReference>
<dbReference type="Pfam" id="PF07676">
    <property type="entry name" value="PD40"/>
    <property type="match status" value="3"/>
</dbReference>
<dbReference type="Pfam" id="PF04052">
    <property type="entry name" value="TolB_N"/>
    <property type="match status" value="1"/>
</dbReference>
<dbReference type="SUPFAM" id="SSF52964">
    <property type="entry name" value="TolB, N-terminal domain"/>
    <property type="match status" value="1"/>
</dbReference>
<dbReference type="SUPFAM" id="SSF69304">
    <property type="entry name" value="Tricorn protease N-terminal domain"/>
    <property type="match status" value="1"/>
</dbReference>